<dbReference type="EC" id="5.2.1.8" evidence="1"/>
<dbReference type="EMBL" id="CP000961">
    <property type="protein sequence ID" value="ACA87385.1"/>
    <property type="molecule type" value="Genomic_DNA"/>
</dbReference>
<dbReference type="RefSeq" id="WP_012325721.1">
    <property type="nucleotide sequence ID" value="NC_010506.1"/>
</dbReference>
<dbReference type="SMR" id="B1KLT8"/>
<dbReference type="STRING" id="392500.Swoo_3114"/>
<dbReference type="KEGG" id="swd:Swoo_3114"/>
<dbReference type="eggNOG" id="COG0544">
    <property type="taxonomic scope" value="Bacteria"/>
</dbReference>
<dbReference type="HOGENOM" id="CLU_033058_2_0_6"/>
<dbReference type="Proteomes" id="UP000002168">
    <property type="component" value="Chromosome"/>
</dbReference>
<dbReference type="GO" id="GO:0005737">
    <property type="term" value="C:cytoplasm"/>
    <property type="evidence" value="ECO:0007669"/>
    <property type="project" value="UniProtKB-SubCell"/>
</dbReference>
<dbReference type="GO" id="GO:0003755">
    <property type="term" value="F:peptidyl-prolyl cis-trans isomerase activity"/>
    <property type="evidence" value="ECO:0007669"/>
    <property type="project" value="UniProtKB-UniRule"/>
</dbReference>
<dbReference type="GO" id="GO:0044183">
    <property type="term" value="F:protein folding chaperone"/>
    <property type="evidence" value="ECO:0007669"/>
    <property type="project" value="TreeGrafter"/>
</dbReference>
<dbReference type="GO" id="GO:0043022">
    <property type="term" value="F:ribosome binding"/>
    <property type="evidence" value="ECO:0007669"/>
    <property type="project" value="TreeGrafter"/>
</dbReference>
<dbReference type="GO" id="GO:0051083">
    <property type="term" value="P:'de novo' cotranslational protein folding"/>
    <property type="evidence" value="ECO:0007669"/>
    <property type="project" value="TreeGrafter"/>
</dbReference>
<dbReference type="GO" id="GO:0051301">
    <property type="term" value="P:cell division"/>
    <property type="evidence" value="ECO:0007669"/>
    <property type="project" value="UniProtKB-KW"/>
</dbReference>
<dbReference type="GO" id="GO:0061077">
    <property type="term" value="P:chaperone-mediated protein folding"/>
    <property type="evidence" value="ECO:0007669"/>
    <property type="project" value="TreeGrafter"/>
</dbReference>
<dbReference type="GO" id="GO:0015031">
    <property type="term" value="P:protein transport"/>
    <property type="evidence" value="ECO:0007669"/>
    <property type="project" value="UniProtKB-UniRule"/>
</dbReference>
<dbReference type="GO" id="GO:0043335">
    <property type="term" value="P:protein unfolding"/>
    <property type="evidence" value="ECO:0007669"/>
    <property type="project" value="TreeGrafter"/>
</dbReference>
<dbReference type="FunFam" id="3.10.50.40:FF:000001">
    <property type="entry name" value="Trigger factor"/>
    <property type="match status" value="1"/>
</dbReference>
<dbReference type="FunFam" id="3.30.70.1050:FF:000001">
    <property type="entry name" value="Trigger factor"/>
    <property type="match status" value="1"/>
</dbReference>
<dbReference type="Gene3D" id="3.10.50.40">
    <property type="match status" value="1"/>
</dbReference>
<dbReference type="Gene3D" id="3.30.70.1050">
    <property type="entry name" value="Trigger factor ribosome-binding domain"/>
    <property type="match status" value="1"/>
</dbReference>
<dbReference type="Gene3D" id="1.10.3120.10">
    <property type="entry name" value="Trigger factor, C-terminal domain"/>
    <property type="match status" value="1"/>
</dbReference>
<dbReference type="HAMAP" id="MF_00303">
    <property type="entry name" value="Trigger_factor_Tig"/>
    <property type="match status" value="1"/>
</dbReference>
<dbReference type="InterPro" id="IPR046357">
    <property type="entry name" value="PPIase_dom_sf"/>
</dbReference>
<dbReference type="InterPro" id="IPR001179">
    <property type="entry name" value="PPIase_FKBP_dom"/>
</dbReference>
<dbReference type="InterPro" id="IPR005215">
    <property type="entry name" value="Trig_fac"/>
</dbReference>
<dbReference type="InterPro" id="IPR008880">
    <property type="entry name" value="Trigger_fac_C"/>
</dbReference>
<dbReference type="InterPro" id="IPR037041">
    <property type="entry name" value="Trigger_fac_C_sf"/>
</dbReference>
<dbReference type="InterPro" id="IPR008881">
    <property type="entry name" value="Trigger_fac_ribosome-bd_bac"/>
</dbReference>
<dbReference type="InterPro" id="IPR036611">
    <property type="entry name" value="Trigger_fac_ribosome-bd_sf"/>
</dbReference>
<dbReference type="InterPro" id="IPR027304">
    <property type="entry name" value="Trigger_fact/SurA_dom_sf"/>
</dbReference>
<dbReference type="NCBIfam" id="TIGR00115">
    <property type="entry name" value="tig"/>
    <property type="match status" value="1"/>
</dbReference>
<dbReference type="PANTHER" id="PTHR30560">
    <property type="entry name" value="TRIGGER FACTOR CHAPERONE AND PEPTIDYL-PROLYL CIS/TRANS ISOMERASE"/>
    <property type="match status" value="1"/>
</dbReference>
<dbReference type="PANTHER" id="PTHR30560:SF3">
    <property type="entry name" value="TRIGGER FACTOR-LIKE PROTEIN TIG, CHLOROPLASTIC"/>
    <property type="match status" value="1"/>
</dbReference>
<dbReference type="Pfam" id="PF00254">
    <property type="entry name" value="FKBP_C"/>
    <property type="match status" value="1"/>
</dbReference>
<dbReference type="Pfam" id="PF05698">
    <property type="entry name" value="Trigger_C"/>
    <property type="match status" value="1"/>
</dbReference>
<dbReference type="Pfam" id="PF05697">
    <property type="entry name" value="Trigger_N"/>
    <property type="match status" value="1"/>
</dbReference>
<dbReference type="PIRSF" id="PIRSF003095">
    <property type="entry name" value="Trigger_factor"/>
    <property type="match status" value="1"/>
</dbReference>
<dbReference type="SUPFAM" id="SSF54534">
    <property type="entry name" value="FKBP-like"/>
    <property type="match status" value="1"/>
</dbReference>
<dbReference type="SUPFAM" id="SSF109998">
    <property type="entry name" value="Triger factor/SurA peptide-binding domain-like"/>
    <property type="match status" value="1"/>
</dbReference>
<dbReference type="SUPFAM" id="SSF102735">
    <property type="entry name" value="Trigger factor ribosome-binding domain"/>
    <property type="match status" value="1"/>
</dbReference>
<dbReference type="PROSITE" id="PS50059">
    <property type="entry name" value="FKBP_PPIASE"/>
    <property type="match status" value="1"/>
</dbReference>
<accession>B1KLT8</accession>
<proteinExistence type="inferred from homology"/>
<sequence length="434" mass="47772">MQVSVETTQGLERRLTISVPAEQIEKAVNDSLKNEAKRARIPGFRPGKVPVSVINKRYGKAIRQDITGEVMQRNFVEAIIAEKLNPAGAPTFVPGESDAENFQFVATFEIYPEVELKGLEDIAVEQPTSDVTDADVDTMIETLRKQHATYEAVERAAADGDKAKINFVGSIDGEEFEGGKAEDFELQLGSGRMIPGFESGVEGHKAGEEFDIEVTFPEDYHAENLKGKVAKFAITLNEVQAANLPEVNDEFATLFGVAEGGLEALKAEISKNMGRELEQALKANVKEQVLNGLLEQNEIELPASLIAGEVEVLRKQAMQRFGDQAANMPELPADLFTEQAERRVKVGLLLGEVIKTNELKAEEERVQGLIASMASAYEDPSEVVEYYNGNQEMMQNMRNVALEEQAVEALLKTAKVTEKAVNFEEFMNKATQQG</sequence>
<evidence type="ECO:0000255" key="1">
    <source>
        <dbReference type="HAMAP-Rule" id="MF_00303"/>
    </source>
</evidence>
<reference key="1">
    <citation type="submission" date="2008-02" db="EMBL/GenBank/DDBJ databases">
        <title>Complete sequence of Shewanella woodyi ATCC 51908.</title>
        <authorList>
            <consortium name="US DOE Joint Genome Institute"/>
            <person name="Copeland A."/>
            <person name="Lucas S."/>
            <person name="Lapidus A."/>
            <person name="Glavina del Rio T."/>
            <person name="Dalin E."/>
            <person name="Tice H."/>
            <person name="Bruce D."/>
            <person name="Goodwin L."/>
            <person name="Pitluck S."/>
            <person name="Sims D."/>
            <person name="Brettin T."/>
            <person name="Detter J.C."/>
            <person name="Han C."/>
            <person name="Kuske C.R."/>
            <person name="Schmutz J."/>
            <person name="Larimer F."/>
            <person name="Land M."/>
            <person name="Hauser L."/>
            <person name="Kyrpides N."/>
            <person name="Lykidis A."/>
            <person name="Zhao J.-S."/>
            <person name="Richardson P."/>
        </authorList>
    </citation>
    <scope>NUCLEOTIDE SEQUENCE [LARGE SCALE GENOMIC DNA]</scope>
    <source>
        <strain>ATCC 51908 / MS32</strain>
    </source>
</reference>
<gene>
    <name evidence="1" type="primary">tig</name>
    <name type="ordered locus">Swoo_3114</name>
</gene>
<name>TIG_SHEWM</name>
<organism>
    <name type="scientific">Shewanella woodyi (strain ATCC 51908 / MS32)</name>
    <dbReference type="NCBI Taxonomy" id="392500"/>
    <lineage>
        <taxon>Bacteria</taxon>
        <taxon>Pseudomonadati</taxon>
        <taxon>Pseudomonadota</taxon>
        <taxon>Gammaproteobacteria</taxon>
        <taxon>Alteromonadales</taxon>
        <taxon>Shewanellaceae</taxon>
        <taxon>Shewanella</taxon>
    </lineage>
</organism>
<protein>
    <recommendedName>
        <fullName evidence="1">Trigger factor</fullName>
        <shortName evidence="1">TF</shortName>
        <ecNumber evidence="1">5.2.1.8</ecNumber>
    </recommendedName>
    <alternativeName>
        <fullName evidence="1">PPIase</fullName>
    </alternativeName>
</protein>
<keyword id="KW-0131">Cell cycle</keyword>
<keyword id="KW-0132">Cell division</keyword>
<keyword id="KW-0143">Chaperone</keyword>
<keyword id="KW-0963">Cytoplasm</keyword>
<keyword id="KW-0413">Isomerase</keyword>
<keyword id="KW-1185">Reference proteome</keyword>
<keyword id="KW-0697">Rotamase</keyword>
<comment type="function">
    <text evidence="1">Involved in protein export. Acts as a chaperone by maintaining the newly synthesized protein in an open conformation. Functions as a peptidyl-prolyl cis-trans isomerase.</text>
</comment>
<comment type="catalytic activity">
    <reaction evidence="1">
        <text>[protein]-peptidylproline (omega=180) = [protein]-peptidylproline (omega=0)</text>
        <dbReference type="Rhea" id="RHEA:16237"/>
        <dbReference type="Rhea" id="RHEA-COMP:10747"/>
        <dbReference type="Rhea" id="RHEA-COMP:10748"/>
        <dbReference type="ChEBI" id="CHEBI:83833"/>
        <dbReference type="ChEBI" id="CHEBI:83834"/>
        <dbReference type="EC" id="5.2.1.8"/>
    </reaction>
</comment>
<comment type="subcellular location">
    <subcellularLocation>
        <location>Cytoplasm</location>
    </subcellularLocation>
    <text evidence="1">About half TF is bound to the ribosome near the polypeptide exit tunnel while the other half is free in the cytoplasm.</text>
</comment>
<comment type="domain">
    <text evidence="1">Consists of 3 domains; the N-terminus binds the ribosome, the middle domain has PPIase activity, while the C-terminus has intrinsic chaperone activity on its own.</text>
</comment>
<comment type="similarity">
    <text evidence="1">Belongs to the FKBP-type PPIase family. Tig subfamily.</text>
</comment>
<feature type="chain" id="PRO_1000115581" description="Trigger factor">
    <location>
        <begin position="1"/>
        <end position="434"/>
    </location>
</feature>
<feature type="domain" description="PPIase FKBP-type" evidence="1">
    <location>
        <begin position="160"/>
        <end position="245"/>
    </location>
</feature>